<evidence type="ECO:0000255" key="1">
    <source>
        <dbReference type="HAMAP-Rule" id="MF_00279"/>
    </source>
</evidence>
<feature type="chain" id="PRO_0000190143" description="Pyridoxine 5'-phosphate synthase">
    <location>
        <begin position="1"/>
        <end position="260"/>
    </location>
</feature>
<feature type="active site" description="Proton acceptor" evidence="1">
    <location>
        <position position="46"/>
    </location>
</feature>
<feature type="active site" description="Proton acceptor" evidence="1">
    <location>
        <position position="76"/>
    </location>
</feature>
<feature type="active site" description="Proton donor" evidence="1">
    <location>
        <position position="204"/>
    </location>
</feature>
<feature type="binding site" evidence="1">
    <location>
        <position position="10"/>
    </location>
    <ligand>
        <name>3-amino-2-oxopropyl phosphate</name>
        <dbReference type="ChEBI" id="CHEBI:57279"/>
    </ligand>
</feature>
<feature type="binding site" evidence="1">
    <location>
        <position position="21"/>
    </location>
    <ligand>
        <name>3-amino-2-oxopropyl phosphate</name>
        <dbReference type="ChEBI" id="CHEBI:57279"/>
    </ligand>
</feature>
<feature type="binding site" evidence="1">
    <location>
        <position position="48"/>
    </location>
    <ligand>
        <name>1-deoxy-D-xylulose 5-phosphate</name>
        <dbReference type="ChEBI" id="CHEBI:57792"/>
    </ligand>
</feature>
<feature type="binding site" evidence="1">
    <location>
        <position position="53"/>
    </location>
    <ligand>
        <name>1-deoxy-D-xylulose 5-phosphate</name>
        <dbReference type="ChEBI" id="CHEBI:57792"/>
    </ligand>
</feature>
<feature type="binding site" evidence="1">
    <location>
        <position position="113"/>
    </location>
    <ligand>
        <name>1-deoxy-D-xylulose 5-phosphate</name>
        <dbReference type="ChEBI" id="CHEBI:57792"/>
    </ligand>
</feature>
<feature type="binding site" evidence="1">
    <location>
        <position position="205"/>
    </location>
    <ligand>
        <name>3-amino-2-oxopropyl phosphate</name>
        <dbReference type="ChEBI" id="CHEBI:57279"/>
    </ligand>
</feature>
<feature type="binding site" evidence="1">
    <location>
        <begin position="227"/>
        <end position="228"/>
    </location>
    <ligand>
        <name>3-amino-2-oxopropyl phosphate</name>
        <dbReference type="ChEBI" id="CHEBI:57279"/>
    </ligand>
</feature>
<feature type="site" description="Transition state stabilizer" evidence="1">
    <location>
        <position position="164"/>
    </location>
</feature>
<dbReference type="EC" id="2.6.99.2" evidence="1"/>
<dbReference type="EMBL" id="AE009442">
    <property type="protein sequence ID" value="AAO27947.1"/>
    <property type="molecule type" value="Genomic_DNA"/>
</dbReference>
<dbReference type="RefSeq" id="WP_004087143.1">
    <property type="nucleotide sequence ID" value="NC_004556.1"/>
</dbReference>
<dbReference type="SMR" id="Q87F88"/>
<dbReference type="KEGG" id="xft:PD_0040"/>
<dbReference type="HOGENOM" id="CLU_074563_1_0_6"/>
<dbReference type="UniPathway" id="UPA00244">
    <property type="reaction ID" value="UER00313"/>
</dbReference>
<dbReference type="Proteomes" id="UP000002516">
    <property type="component" value="Chromosome"/>
</dbReference>
<dbReference type="GO" id="GO:0005829">
    <property type="term" value="C:cytosol"/>
    <property type="evidence" value="ECO:0007669"/>
    <property type="project" value="TreeGrafter"/>
</dbReference>
<dbReference type="GO" id="GO:0033856">
    <property type="term" value="F:pyridoxine 5'-phosphate synthase activity"/>
    <property type="evidence" value="ECO:0007669"/>
    <property type="project" value="UniProtKB-EC"/>
</dbReference>
<dbReference type="GO" id="GO:0008615">
    <property type="term" value="P:pyridoxine biosynthetic process"/>
    <property type="evidence" value="ECO:0007669"/>
    <property type="project" value="UniProtKB-UniRule"/>
</dbReference>
<dbReference type="CDD" id="cd00003">
    <property type="entry name" value="PNPsynthase"/>
    <property type="match status" value="1"/>
</dbReference>
<dbReference type="Gene3D" id="3.20.20.70">
    <property type="entry name" value="Aldolase class I"/>
    <property type="match status" value="1"/>
</dbReference>
<dbReference type="HAMAP" id="MF_00279">
    <property type="entry name" value="PdxJ"/>
    <property type="match status" value="1"/>
</dbReference>
<dbReference type="InterPro" id="IPR013785">
    <property type="entry name" value="Aldolase_TIM"/>
</dbReference>
<dbReference type="InterPro" id="IPR004569">
    <property type="entry name" value="PyrdxlP_synth_PdxJ"/>
</dbReference>
<dbReference type="InterPro" id="IPR036130">
    <property type="entry name" value="Pyridoxine-5'_phos_synth"/>
</dbReference>
<dbReference type="NCBIfam" id="TIGR00559">
    <property type="entry name" value="pdxJ"/>
    <property type="match status" value="1"/>
</dbReference>
<dbReference type="NCBIfam" id="NF003626">
    <property type="entry name" value="PRK05265.1-4"/>
    <property type="match status" value="1"/>
</dbReference>
<dbReference type="PANTHER" id="PTHR30456">
    <property type="entry name" value="PYRIDOXINE 5'-PHOSPHATE SYNTHASE"/>
    <property type="match status" value="1"/>
</dbReference>
<dbReference type="PANTHER" id="PTHR30456:SF0">
    <property type="entry name" value="PYRIDOXINE 5'-PHOSPHATE SYNTHASE"/>
    <property type="match status" value="1"/>
</dbReference>
<dbReference type="Pfam" id="PF03740">
    <property type="entry name" value="PdxJ"/>
    <property type="match status" value="1"/>
</dbReference>
<dbReference type="SUPFAM" id="SSF63892">
    <property type="entry name" value="Pyridoxine 5'-phosphate synthase"/>
    <property type="match status" value="1"/>
</dbReference>
<protein>
    <recommendedName>
        <fullName evidence="1">Pyridoxine 5'-phosphate synthase</fullName>
        <shortName evidence="1">PNP synthase</shortName>
        <ecNumber evidence="1">2.6.99.2</ecNumber>
    </recommendedName>
</protein>
<name>PDXJ_XYLFT</name>
<reference key="1">
    <citation type="journal article" date="2003" name="J. Bacteriol.">
        <title>Comparative analyses of the complete genome sequences of Pierce's disease and citrus variegated chlorosis strains of Xylella fastidiosa.</title>
        <authorList>
            <person name="Van Sluys M.A."/>
            <person name="de Oliveira M.C."/>
            <person name="Monteiro-Vitorello C.B."/>
            <person name="Miyaki C.Y."/>
            <person name="Furlan L.R."/>
            <person name="Camargo L.E.A."/>
            <person name="da Silva A.C.R."/>
            <person name="Moon D.H."/>
            <person name="Takita M.A."/>
            <person name="Lemos E.G.M."/>
            <person name="Machado M.A."/>
            <person name="Ferro M.I.T."/>
            <person name="da Silva F.R."/>
            <person name="Goldman M.H.S."/>
            <person name="Goldman G.H."/>
            <person name="Lemos M.V.F."/>
            <person name="El-Dorry H."/>
            <person name="Tsai S.M."/>
            <person name="Carrer H."/>
            <person name="Carraro D.M."/>
            <person name="de Oliveira R.C."/>
            <person name="Nunes L.R."/>
            <person name="Siqueira W.J."/>
            <person name="Coutinho L.L."/>
            <person name="Kimura E.T."/>
            <person name="Ferro E.S."/>
            <person name="Harakava R."/>
            <person name="Kuramae E.E."/>
            <person name="Marino C.L."/>
            <person name="Giglioti E."/>
            <person name="Abreu I.L."/>
            <person name="Alves L.M.C."/>
            <person name="do Amaral A.M."/>
            <person name="Baia G.S."/>
            <person name="Blanco S.R."/>
            <person name="Brito M.S."/>
            <person name="Cannavan F.S."/>
            <person name="Celestino A.V."/>
            <person name="da Cunha A.F."/>
            <person name="Fenille R.C."/>
            <person name="Ferro J.A."/>
            <person name="Formighieri E.F."/>
            <person name="Kishi L.T."/>
            <person name="Leoni S.G."/>
            <person name="Oliveira A.R."/>
            <person name="Rosa V.E. Jr."/>
            <person name="Sassaki F.T."/>
            <person name="Sena J.A.D."/>
            <person name="de Souza A.A."/>
            <person name="Truffi D."/>
            <person name="Tsukumo F."/>
            <person name="Yanai G.M."/>
            <person name="Zaros L.G."/>
            <person name="Civerolo E.L."/>
            <person name="Simpson A.J.G."/>
            <person name="Almeida N.F. Jr."/>
            <person name="Setubal J.C."/>
            <person name="Kitajima J.P."/>
        </authorList>
    </citation>
    <scope>NUCLEOTIDE SEQUENCE [LARGE SCALE GENOMIC DNA]</scope>
    <source>
        <strain>Temecula1 / ATCC 700964</strain>
    </source>
</reference>
<accession>Q87F88</accession>
<proteinExistence type="inferred from homology"/>
<keyword id="KW-0963">Cytoplasm</keyword>
<keyword id="KW-0664">Pyridoxine biosynthesis</keyword>
<keyword id="KW-1185">Reference proteome</keyword>
<keyword id="KW-0808">Transferase</keyword>
<organism>
    <name type="scientific">Xylella fastidiosa (strain Temecula1 / ATCC 700964)</name>
    <dbReference type="NCBI Taxonomy" id="183190"/>
    <lineage>
        <taxon>Bacteria</taxon>
        <taxon>Pseudomonadati</taxon>
        <taxon>Pseudomonadota</taxon>
        <taxon>Gammaproteobacteria</taxon>
        <taxon>Lysobacterales</taxon>
        <taxon>Lysobacteraceae</taxon>
        <taxon>Xylella</taxon>
    </lineage>
</organism>
<gene>
    <name evidence="1" type="primary">pdxJ</name>
    <name type="ordered locus">PD_0040</name>
</gene>
<sequence>MSQRTRLSVNVNKIAVLRNSRGHGAPDVIRAASACIDAGAHGITVHPRPDARHIRHDDVIRLSALTRARGVEFNIEGNPFAEPRAGYCGLLALCRETRPHQVTLVPDGDQQITSDHGFDFAREGPGLRPLIDEIKQWGCRVSLFVDVNVTGLADAAIWGVDRIELYTGPYAEMHHAGCSDAVLREFATTARLAQDVGLGVNAGHDLSQTNLGVFLGAVPDVLEVSIGHALISEALYEGLIPTVRRYLDILDSVNPAVSMR</sequence>
<comment type="function">
    <text evidence="1">Catalyzes the complicated ring closure reaction between the two acyclic compounds 1-deoxy-D-xylulose-5-phosphate (DXP) and 3-amino-2-oxopropyl phosphate (1-amino-acetone-3-phosphate or AAP) to form pyridoxine 5'-phosphate (PNP) and inorganic phosphate.</text>
</comment>
<comment type="catalytic activity">
    <reaction evidence="1">
        <text>3-amino-2-oxopropyl phosphate + 1-deoxy-D-xylulose 5-phosphate = pyridoxine 5'-phosphate + phosphate + 2 H2O + H(+)</text>
        <dbReference type="Rhea" id="RHEA:15265"/>
        <dbReference type="ChEBI" id="CHEBI:15377"/>
        <dbReference type="ChEBI" id="CHEBI:15378"/>
        <dbReference type="ChEBI" id="CHEBI:43474"/>
        <dbReference type="ChEBI" id="CHEBI:57279"/>
        <dbReference type="ChEBI" id="CHEBI:57792"/>
        <dbReference type="ChEBI" id="CHEBI:58589"/>
        <dbReference type="EC" id="2.6.99.2"/>
    </reaction>
</comment>
<comment type="pathway">
    <text evidence="1">Cofactor biosynthesis; pyridoxine 5'-phosphate biosynthesis; pyridoxine 5'-phosphate from D-erythrose 4-phosphate: step 5/5.</text>
</comment>
<comment type="subunit">
    <text evidence="1">Homooctamer; tetramer of dimers.</text>
</comment>
<comment type="subcellular location">
    <subcellularLocation>
        <location evidence="1">Cytoplasm</location>
    </subcellularLocation>
</comment>
<comment type="similarity">
    <text evidence="1">Belongs to the PNP synthase family.</text>
</comment>